<reference key="1">
    <citation type="submission" date="1999-08" db="EMBL/GenBank/DDBJ databases">
        <title>mhpB from Pseudomonas putida ML2.</title>
        <authorList>
            <person name="Panicker G."/>
            <person name="Tan H.M."/>
        </authorList>
    </citation>
    <scope>NUCLEOTIDE SEQUENCE [GENOMIC DNA]</scope>
    <source>
        <strain>ML2</strain>
        <plasmid>pHMT112</plasmid>
    </source>
</reference>
<reference key="2">
    <citation type="submission" date="2004-11" db="EMBL/GenBank/DDBJ databases">
        <title>GJ31 meta-operon.</title>
        <authorList>
            <person name="Reineke W."/>
            <person name="Kunze M."/>
        </authorList>
    </citation>
    <scope>NUCLEOTIDE SEQUENCE [GENOMIC DNA]</scope>
    <source>
        <strain>GJ31</strain>
        <plasmid>pKW1</plasmid>
    </source>
</reference>
<comment type="function">
    <text evidence="1">Catalyzes the non-heme iron(II)-dependent oxidative cleavage of 2,3-dihydroxyphenylpropionic acid and 2,3-dihydroxicinnamic acid into 2-hydroxy-6-ketononadienedioate and 2-hydroxy-6-ketononatrienedioate, respectively.</text>
</comment>
<comment type="catalytic activity">
    <reaction>
        <text>3-(2,3-dihydroxyphenyl)propanoate + O2 = (2Z,4E)-2-hydroxy-6-oxonona-2,4-dienedioate + H(+)</text>
        <dbReference type="Rhea" id="RHEA:23840"/>
        <dbReference type="ChEBI" id="CHEBI:15378"/>
        <dbReference type="ChEBI" id="CHEBI:15379"/>
        <dbReference type="ChEBI" id="CHEBI:46951"/>
        <dbReference type="ChEBI" id="CHEBI:66887"/>
        <dbReference type="EC" id="1.13.11.16"/>
    </reaction>
</comment>
<comment type="catalytic activity">
    <reaction>
        <text>(2E)-3-(2,3-dihydroxyphenyl)prop-2-enoate + O2 = (2Z,4E,7E)-2-hydroxy-6-oxonona-2,4,7-trienedioate + H(+)</text>
        <dbReference type="Rhea" id="RHEA:25054"/>
        <dbReference type="ChEBI" id="CHEBI:15378"/>
        <dbReference type="ChEBI" id="CHEBI:15379"/>
        <dbReference type="ChEBI" id="CHEBI:58642"/>
        <dbReference type="ChEBI" id="CHEBI:66888"/>
        <dbReference type="EC" id="1.13.11.16"/>
    </reaction>
</comment>
<comment type="cofactor">
    <cofactor evidence="1">
        <name>Fe(2+)</name>
        <dbReference type="ChEBI" id="CHEBI:29033"/>
    </cofactor>
</comment>
<comment type="pathway">
    <text>Aromatic compound metabolism; 3-phenylpropanoate degradation.</text>
</comment>
<comment type="subunit">
    <text evidence="1">Homotetramer.</text>
</comment>
<comment type="similarity">
    <text evidence="2">Belongs to the LigB/MhpB extradiol dioxygenase family.</text>
</comment>
<comment type="sequence caution" evidence="2">
    <conflict type="erroneous initiation">
        <sequence resource="EMBL-CDS" id="AAX50134"/>
    </conflict>
</comment>
<organism>
    <name type="scientific">Pseudomonas putida</name>
    <name type="common">Arthrobacter siderocapsulatus</name>
    <dbReference type="NCBI Taxonomy" id="303"/>
    <lineage>
        <taxon>Bacteria</taxon>
        <taxon>Pseudomonadati</taxon>
        <taxon>Pseudomonadota</taxon>
        <taxon>Gammaproteobacteria</taxon>
        <taxon>Pseudomonadales</taxon>
        <taxon>Pseudomonadaceae</taxon>
        <taxon>Pseudomonas</taxon>
    </lineage>
</organism>
<protein>
    <recommendedName>
        <fullName>2,3-dihydroxyphenylpropionate/2,3-dihydroxicinnamic acid 1,2-dioxygenase 2</fullName>
        <ecNumber>1.13.11.16</ecNumber>
    </recommendedName>
    <alternativeName>
        <fullName>3-carboxyethylcatechol 2,3-dioxygenase 2</fullName>
    </alternativeName>
</protein>
<accession>Q9F9U5</accession>
<accession>Q49KF7</accession>
<sequence length="314" mass="34581">MNAYLHCLSHTPLIGHFDPNQDVLDEVAEVVRAARARIEAFNPELVVLFAPDHYNGFFYDVMPPFCLGMEAEAIGDFGSLAGTLSVPKDVAEACAESVLTSGIDLAVSYRMQVDHGFAQPLDFLLGGLDKYPVLPVFVNCVAPPLPTFERVRLLGDAIGRFTRGLNKRVLFLGSGGLSHQPPVPELAKVDARMADRLMGSGRNLPPEERDARTQRVVVAAERFVENQNTLHPLNPKWDRYFLDVVEQDLLSQLDDLSNAHLSELAGKSTHEVKAWVAAFSALSAHGAYTATDRYYRPIPEWIAGFGSISAHTQR</sequence>
<proteinExistence type="inferred from homology"/>
<geneLocation type="plasmid">
    <name>pHMT112</name>
</geneLocation>
<geneLocation type="plasmid">
    <name>pKW1</name>
</geneLocation>
<feature type="chain" id="PRO_0000337663" description="2,3-dihydroxyphenylpropionate/2,3-dihydroxicinnamic acid 1,2-dioxygenase 2">
    <location>
        <begin position="1"/>
        <end position="314"/>
    </location>
</feature>
<feature type="active site" description="Proton donor" evidence="1">
    <location>
        <position position="115"/>
    </location>
</feature>
<feature type="active site" description="Proton acceptor" evidence="1">
    <location>
        <position position="179"/>
    </location>
</feature>
<feature type="sequence conflict" description="In Ref. 1; AAX50134." evidence="2" ref="1">
    <original>N</original>
    <variation>T</variation>
    <location>
        <position position="20"/>
    </location>
</feature>
<feature type="sequence conflict" description="In Ref. 1; AAX50134." evidence="2" ref="1">
    <original>E</original>
    <variation>A</variation>
    <location>
        <position position="70"/>
    </location>
</feature>
<feature type="sequence conflict" description="In Ref. 1; AAX50134." evidence="2" ref="1">
    <original>A</original>
    <variation>V</variation>
    <location>
        <position position="81"/>
    </location>
</feature>
<feature type="sequence conflict" description="In Ref. 1; AAX50134." evidence="2" ref="1">
    <original>DV</original>
    <variation>EL</variation>
    <location>
        <begin position="89"/>
        <end position="90"/>
    </location>
</feature>
<feature type="sequence conflict" description="In Ref. 1; AAX50134." evidence="2" ref="1">
    <original>D</original>
    <variation>E</variation>
    <location>
        <position position="122"/>
    </location>
</feature>
<feature type="sequence conflict" description="In Ref. 1; AAX50134." evidence="2" ref="1">
    <original>D</original>
    <variation>E</variation>
    <location>
        <position position="156"/>
    </location>
</feature>
<feature type="sequence conflict" description="In Ref. 1; AAX50134." evidence="2" ref="1">
    <original>N</original>
    <variation>D</variation>
    <location>
        <position position="203"/>
    </location>
</feature>
<feature type="sequence conflict" description="In Ref. 1; AAX50134." evidence="2" ref="1">
    <original>R</original>
    <variation>Q</variation>
    <location>
        <position position="215"/>
    </location>
</feature>
<feature type="sequence conflict" description="In Ref. 1; AAX50134." evidence="2" ref="1">
    <original>N</original>
    <variation>D</variation>
    <location>
        <position position="226"/>
    </location>
</feature>
<feature type="sequence conflict" description="In Ref. 1; AAX50134." evidence="2" ref="1">
    <original>R</original>
    <variation>Q</variation>
    <location>
        <position position="239"/>
    </location>
</feature>
<feature type="sequence conflict" description="In Ref. 1; AAX50134." evidence="2" ref="1">
    <original>L</original>
    <variation>V</variation>
    <location>
        <position position="250"/>
    </location>
</feature>
<feature type="sequence conflict" description="In Ref. 1; AAX50134." evidence="2" ref="1">
    <original>A</original>
    <variation>S</variation>
    <location>
        <position position="259"/>
    </location>
</feature>
<feature type="sequence conflict" description="In Ref. 1; AAX50134." evidence="2" ref="1">
    <original>S</original>
    <variation>A</variation>
    <location>
        <position position="283"/>
    </location>
</feature>
<keyword id="KW-0058">Aromatic hydrocarbons catabolism</keyword>
<keyword id="KW-0223">Dioxygenase</keyword>
<keyword id="KW-0408">Iron</keyword>
<keyword id="KW-0560">Oxidoreductase</keyword>
<keyword id="KW-0614">Plasmid</keyword>
<dbReference type="EC" id="1.13.11.16"/>
<dbReference type="EMBL" id="AF176355">
    <property type="protein sequence ID" value="AAG09232.1"/>
    <property type="molecule type" value="Genomic_DNA"/>
</dbReference>
<dbReference type="EMBL" id="AY831461">
    <property type="protein sequence ID" value="AAX50134.1"/>
    <property type="status" value="ALT_INIT"/>
    <property type="molecule type" value="Genomic_DNA"/>
</dbReference>
<dbReference type="SMR" id="Q9F9U5"/>
<dbReference type="UniPathway" id="UPA00714"/>
<dbReference type="GO" id="GO:0047070">
    <property type="term" value="F:3-carboxyethylcatechol 2,3-dioxygenase activity"/>
    <property type="evidence" value="ECO:0007669"/>
    <property type="project" value="UniProtKB-UniRule"/>
</dbReference>
<dbReference type="GO" id="GO:0008198">
    <property type="term" value="F:ferrous iron binding"/>
    <property type="evidence" value="ECO:0007669"/>
    <property type="project" value="InterPro"/>
</dbReference>
<dbReference type="GO" id="GO:0019380">
    <property type="term" value="P:3-phenylpropionate catabolic process"/>
    <property type="evidence" value="ECO:0007669"/>
    <property type="project" value="UniProtKB-UniRule"/>
</dbReference>
<dbReference type="CDD" id="cd07365">
    <property type="entry name" value="MhpB_like"/>
    <property type="match status" value="1"/>
</dbReference>
<dbReference type="Gene3D" id="3.40.830.10">
    <property type="entry name" value="LigB-like"/>
    <property type="match status" value="1"/>
</dbReference>
<dbReference type="HAMAP" id="MF_01653">
    <property type="entry name" value="MhpB"/>
    <property type="match status" value="1"/>
</dbReference>
<dbReference type="InterPro" id="IPR023789">
    <property type="entry name" value="DHPP/DHXA_dioxygenase"/>
</dbReference>
<dbReference type="InterPro" id="IPR004183">
    <property type="entry name" value="Xdiol_dOase_suB"/>
</dbReference>
<dbReference type="NCBIfam" id="NF009907">
    <property type="entry name" value="PRK13370.1-1"/>
    <property type="match status" value="1"/>
</dbReference>
<dbReference type="NCBIfam" id="NF009908">
    <property type="entry name" value="PRK13370.1-2"/>
    <property type="match status" value="1"/>
</dbReference>
<dbReference type="NCBIfam" id="NF009910">
    <property type="entry name" value="PRK13370.1-4"/>
    <property type="match status" value="1"/>
</dbReference>
<dbReference type="Pfam" id="PF02900">
    <property type="entry name" value="LigB"/>
    <property type="match status" value="1"/>
</dbReference>
<dbReference type="SUPFAM" id="SSF53213">
    <property type="entry name" value="LigB-like"/>
    <property type="match status" value="1"/>
</dbReference>
<name>MHPB2_PSEPU</name>
<evidence type="ECO:0000250" key="1"/>
<evidence type="ECO:0000305" key="2"/>
<gene>
    <name type="primary">mhpB2</name>
    <name type="synonym">cbzE2</name>
</gene>